<protein>
    <recommendedName>
        <fullName>Transcription activator of gluconeogenesis ERT1-2</fullName>
    </recommendedName>
</protein>
<evidence type="ECO:0000250" key="1"/>
<evidence type="ECO:0000255" key="2">
    <source>
        <dbReference type="PROSITE-ProRule" id="PRU00227"/>
    </source>
</evidence>
<evidence type="ECO:0000256" key="3">
    <source>
        <dbReference type="SAM" id="MobiDB-lite"/>
    </source>
</evidence>
<evidence type="ECO:0000305" key="4"/>
<organism>
    <name type="scientific">Yarrowia lipolytica (strain CLIB 122 / E 150)</name>
    <name type="common">Yeast</name>
    <name type="synonym">Candida lipolytica</name>
    <dbReference type="NCBI Taxonomy" id="284591"/>
    <lineage>
        <taxon>Eukaryota</taxon>
        <taxon>Fungi</taxon>
        <taxon>Dikarya</taxon>
        <taxon>Ascomycota</taxon>
        <taxon>Saccharomycotina</taxon>
        <taxon>Dipodascomycetes</taxon>
        <taxon>Dipodascales</taxon>
        <taxon>Dipodascales incertae sedis</taxon>
        <taxon>Yarrowia</taxon>
    </lineage>
</organism>
<proteinExistence type="inferred from homology"/>
<gene>
    <name type="primary">ERT1-2</name>
    <name type="ordered locus">YALI0E03410g</name>
</gene>
<reference key="1">
    <citation type="journal article" date="2004" name="Nature">
        <title>Genome evolution in yeasts.</title>
        <authorList>
            <person name="Dujon B."/>
            <person name="Sherman D."/>
            <person name="Fischer G."/>
            <person name="Durrens P."/>
            <person name="Casaregola S."/>
            <person name="Lafontaine I."/>
            <person name="de Montigny J."/>
            <person name="Marck C."/>
            <person name="Neuveglise C."/>
            <person name="Talla E."/>
            <person name="Goffard N."/>
            <person name="Frangeul L."/>
            <person name="Aigle M."/>
            <person name="Anthouard V."/>
            <person name="Babour A."/>
            <person name="Barbe V."/>
            <person name="Barnay S."/>
            <person name="Blanchin S."/>
            <person name="Beckerich J.-M."/>
            <person name="Beyne E."/>
            <person name="Bleykasten C."/>
            <person name="Boisrame A."/>
            <person name="Boyer J."/>
            <person name="Cattolico L."/>
            <person name="Confanioleri F."/>
            <person name="de Daruvar A."/>
            <person name="Despons L."/>
            <person name="Fabre E."/>
            <person name="Fairhead C."/>
            <person name="Ferry-Dumazet H."/>
            <person name="Groppi A."/>
            <person name="Hantraye F."/>
            <person name="Hennequin C."/>
            <person name="Jauniaux N."/>
            <person name="Joyet P."/>
            <person name="Kachouri R."/>
            <person name="Kerrest A."/>
            <person name="Koszul R."/>
            <person name="Lemaire M."/>
            <person name="Lesur I."/>
            <person name="Ma L."/>
            <person name="Muller H."/>
            <person name="Nicaud J.-M."/>
            <person name="Nikolski M."/>
            <person name="Oztas S."/>
            <person name="Ozier-Kalogeropoulos O."/>
            <person name="Pellenz S."/>
            <person name="Potier S."/>
            <person name="Richard G.-F."/>
            <person name="Straub M.-L."/>
            <person name="Suleau A."/>
            <person name="Swennen D."/>
            <person name="Tekaia F."/>
            <person name="Wesolowski-Louvel M."/>
            <person name="Westhof E."/>
            <person name="Wirth B."/>
            <person name="Zeniou-Meyer M."/>
            <person name="Zivanovic Y."/>
            <person name="Bolotin-Fukuhara M."/>
            <person name="Thierry A."/>
            <person name="Bouchier C."/>
            <person name="Caudron B."/>
            <person name="Scarpelli C."/>
            <person name="Gaillardin C."/>
            <person name="Weissenbach J."/>
            <person name="Wincker P."/>
            <person name="Souciet J.-L."/>
        </authorList>
    </citation>
    <scope>NUCLEOTIDE SEQUENCE [LARGE SCALE GENOMIC DNA]</scope>
    <source>
        <strain>CLIB 122 / E 150</strain>
    </source>
</reference>
<comment type="function">
    <text evidence="1">Transcription factor which regulates nonfermentable carbon utilization. Activator of gluconeogenetic genes (By similarity).</text>
</comment>
<comment type="subcellular location">
    <subcellularLocation>
        <location evidence="2">Nucleus</location>
    </subcellularLocation>
</comment>
<comment type="similarity">
    <text evidence="4">Belongs to the ERT1/acuK family.</text>
</comment>
<feature type="chain" id="PRO_0000406472" description="Transcription activator of gluconeogenesis ERT1-2">
    <location>
        <begin position="1"/>
        <end position="559"/>
    </location>
</feature>
<feature type="domain" description="PAS">
    <location>
        <begin position="440"/>
        <end position="512"/>
    </location>
</feature>
<feature type="DNA-binding region" description="Zn(2)-C6 fungal-type" evidence="2">
    <location>
        <begin position="23"/>
        <end position="51"/>
    </location>
</feature>
<feature type="region of interest" description="Disordered" evidence="3">
    <location>
        <begin position="63"/>
        <end position="159"/>
    </location>
</feature>
<feature type="region of interest" description="Disordered" evidence="3">
    <location>
        <begin position="231"/>
        <end position="263"/>
    </location>
</feature>
<feature type="region of interest" description="Disordered" evidence="3">
    <location>
        <begin position="329"/>
        <end position="349"/>
    </location>
</feature>
<feature type="compositionally biased region" description="Low complexity" evidence="3">
    <location>
        <begin position="139"/>
        <end position="159"/>
    </location>
</feature>
<feature type="compositionally biased region" description="Low complexity" evidence="3">
    <location>
        <begin position="231"/>
        <end position="244"/>
    </location>
</feature>
<feature type="compositionally biased region" description="Polar residues" evidence="3">
    <location>
        <begin position="245"/>
        <end position="260"/>
    </location>
</feature>
<name>ERT12_YARLI</name>
<sequence length="559" mass="61447">MEKPVVISQRTGKPKRRKAHRACIHCQRTHLTCDNNRPCERCVARGFADTCVDGVRKKLKYLDDKEDNKPSKGLSPAPGVNVQPKLSPATRSARSSSAGFPDTKGNMQQQHMGNMPVPNTPQNGHPNLGTPGMAHTNLQGPQRQGAQQPQGGQSSTPSQLPADYLIHQQLLATEINQLGDLGRTGEGDFSSDWFSDLQLSGHSFQSVATNMEYSILSNMVYSSGQPNSAVSNSLLLGNNSQSPNTHSPHNQDQPTPQAATPSAKIKQLIESNGLSAKDLNQYPLAGEFVNDTFLTVPEIVAFNETRRNVKDSELTTDEKLRPLSFAVAAGQPQNTNGNGNGSEAPDSPSKSIFSSGALEAVYSNLPDYTDPIQVYTNITKPFSYTPGYHGLISYLKGRFNKQQLVQMTKYMAEYRPSFIACTNSLKEEDLVFMEQCFQRALLEYQKFISFSGTPTLVWRRTGQLAAVGKEFCQLSGWSEQRLIGQQTFIVELLDDNSVLEYFELFSRIAFGDSRGATMADCTLLTPTGAKIKTSSIWTLKRDVFGNPMMIVGNFLPILS</sequence>
<dbReference type="EMBL" id="CR382131">
    <property type="protein sequence ID" value="CAG79077.1"/>
    <property type="molecule type" value="Genomic_DNA"/>
</dbReference>
<dbReference type="RefSeq" id="XP_503498.1">
    <property type="nucleotide sequence ID" value="XM_503498.1"/>
</dbReference>
<dbReference type="SMR" id="Q6C764"/>
<dbReference type="FunCoup" id="Q6C764">
    <property type="interactions" value="239"/>
</dbReference>
<dbReference type="EnsemblFungi" id="CAG79077">
    <property type="protein sequence ID" value="CAG79077"/>
    <property type="gene ID" value="YALI0_E03410g"/>
</dbReference>
<dbReference type="KEGG" id="yli:2912149"/>
<dbReference type="VEuPathDB" id="FungiDB:YALI0_E03410g"/>
<dbReference type="HOGENOM" id="CLU_010748_2_3_1"/>
<dbReference type="InParanoid" id="Q6C764"/>
<dbReference type="OMA" id="VMTTCKL"/>
<dbReference type="OrthoDB" id="116391at4891"/>
<dbReference type="Proteomes" id="UP000001300">
    <property type="component" value="Chromosome E"/>
</dbReference>
<dbReference type="GO" id="GO:0005634">
    <property type="term" value="C:nucleus"/>
    <property type="evidence" value="ECO:0000318"/>
    <property type="project" value="GO_Central"/>
</dbReference>
<dbReference type="GO" id="GO:0003700">
    <property type="term" value="F:DNA-binding transcription factor activity"/>
    <property type="evidence" value="ECO:0000318"/>
    <property type="project" value="GO_Central"/>
</dbReference>
<dbReference type="GO" id="GO:0000981">
    <property type="term" value="F:DNA-binding transcription factor activity, RNA polymerase II-specific"/>
    <property type="evidence" value="ECO:0007669"/>
    <property type="project" value="InterPro"/>
</dbReference>
<dbReference type="GO" id="GO:0000977">
    <property type="term" value="F:RNA polymerase II transcription regulatory region sequence-specific DNA binding"/>
    <property type="evidence" value="ECO:0000318"/>
    <property type="project" value="GO_Central"/>
</dbReference>
<dbReference type="GO" id="GO:0008270">
    <property type="term" value="F:zinc ion binding"/>
    <property type="evidence" value="ECO:0007669"/>
    <property type="project" value="InterPro"/>
</dbReference>
<dbReference type="GO" id="GO:0009267">
    <property type="term" value="P:cellular response to starvation"/>
    <property type="evidence" value="ECO:0000318"/>
    <property type="project" value="GO_Central"/>
</dbReference>
<dbReference type="GO" id="GO:0006094">
    <property type="term" value="P:gluconeogenesis"/>
    <property type="evidence" value="ECO:0007669"/>
    <property type="project" value="UniProtKB-KW"/>
</dbReference>
<dbReference type="CDD" id="cd00067">
    <property type="entry name" value="GAL4"/>
    <property type="match status" value="1"/>
</dbReference>
<dbReference type="CDD" id="cd00130">
    <property type="entry name" value="PAS"/>
    <property type="match status" value="1"/>
</dbReference>
<dbReference type="Gene3D" id="4.10.240.10">
    <property type="entry name" value="Zn(2)-C6 fungal-type DNA-binding domain"/>
    <property type="match status" value="1"/>
</dbReference>
<dbReference type="InterPro" id="IPR050335">
    <property type="entry name" value="ERT1_acuK_gluconeogen_tf"/>
</dbReference>
<dbReference type="InterPro" id="IPR000014">
    <property type="entry name" value="PAS"/>
</dbReference>
<dbReference type="InterPro" id="IPR056751">
    <property type="entry name" value="PAS_13"/>
</dbReference>
<dbReference type="InterPro" id="IPR036864">
    <property type="entry name" value="Zn2-C6_fun-type_DNA-bd_sf"/>
</dbReference>
<dbReference type="InterPro" id="IPR001138">
    <property type="entry name" value="Zn2Cys6_DnaBD"/>
</dbReference>
<dbReference type="PANTHER" id="PTHR47659:SF1">
    <property type="entry name" value="TRANSCRIPTION ACTIVATOR OF GLUCONEOGENESIS ERT1"/>
    <property type="match status" value="1"/>
</dbReference>
<dbReference type="PANTHER" id="PTHR47659">
    <property type="entry name" value="ZN(II)2CYS6 TRANSCRIPTION FACTOR (EUROFUNG)-RELATED"/>
    <property type="match status" value="1"/>
</dbReference>
<dbReference type="Pfam" id="PF24990">
    <property type="entry name" value="PAS_13"/>
    <property type="match status" value="2"/>
</dbReference>
<dbReference type="Pfam" id="PF00172">
    <property type="entry name" value="Zn_clus"/>
    <property type="match status" value="1"/>
</dbReference>
<dbReference type="SMART" id="SM00066">
    <property type="entry name" value="GAL4"/>
    <property type="match status" value="1"/>
</dbReference>
<dbReference type="SUPFAM" id="SSF57701">
    <property type="entry name" value="Zn2/Cys6 DNA-binding domain"/>
    <property type="match status" value="1"/>
</dbReference>
<dbReference type="PROSITE" id="PS50048">
    <property type="entry name" value="ZN2_CY6_FUNGAL_2"/>
    <property type="match status" value="1"/>
</dbReference>
<keyword id="KW-0010">Activator</keyword>
<keyword id="KW-0238">DNA-binding</keyword>
<keyword id="KW-0312">Gluconeogenesis</keyword>
<keyword id="KW-0479">Metal-binding</keyword>
<keyword id="KW-0539">Nucleus</keyword>
<keyword id="KW-1185">Reference proteome</keyword>
<keyword id="KW-0804">Transcription</keyword>
<keyword id="KW-0805">Transcription regulation</keyword>
<keyword id="KW-0862">Zinc</keyword>
<accession>Q6C764</accession>